<reference key="1">
    <citation type="journal article" date="2011" name="J. Bacteriol.">
        <title>Genome sequence of 'Pedosphaera parvula' Ellin514, an aerobic Verrucomicrobial isolate from pasture soil.</title>
        <authorList>
            <person name="Kant R."/>
            <person name="van Passel M.W."/>
            <person name="Sangwan P."/>
            <person name="Palva A."/>
            <person name="Lucas S."/>
            <person name="Copeland A."/>
            <person name="Lapidus A."/>
            <person name="Glavina Del Rio T."/>
            <person name="Dalin E."/>
            <person name="Tice H."/>
            <person name="Bruce D."/>
            <person name="Goodwin L."/>
            <person name="Pitluck S."/>
            <person name="Chertkov O."/>
            <person name="Larimer F.W."/>
            <person name="Land M.L."/>
            <person name="Hauser L."/>
            <person name="Brettin T.S."/>
            <person name="Detter J.C."/>
            <person name="Han S."/>
            <person name="de Vos W.M."/>
            <person name="Janssen P.H."/>
            <person name="Smidt H."/>
        </authorList>
    </citation>
    <scope>NUCLEOTIDE SEQUENCE [LARGE SCALE GENOMIC DNA]</scope>
    <source>
        <strain>Ellin514</strain>
    </source>
</reference>
<reference key="2">
    <citation type="journal article" date="2017" name="Biochem. Biophys. Res. Commun.">
        <title>Identification of UBact, a ubiquitin-like protein, along with other homologous components of a conjugation system and the proteasome in different gram-negative bacteria.</title>
        <authorList>
            <person name="Lehmann G."/>
            <person name="Udasin R.G."/>
            <person name="Livneh I."/>
            <person name="Ciechanover A."/>
        </authorList>
    </citation>
    <scope>PREDICTED FUNCTION</scope>
    <scope>DEAMIDATION AT GLN-56</scope>
    <source>
        <strain>Ellin514</strain>
    </source>
</reference>
<name>UBACT_PEDPL</name>
<gene>
    <name evidence="3" type="primary">ubact</name>
    <name evidence="6" type="ORF">Cflav_PD4743</name>
</gene>
<sequence>MPDQAQKTRPVGPGPSGGGEGPGSPKVEKPNTEELLKRMRKVDPDQAKRYRQRTGQ</sequence>
<proteinExistence type="evidence at protein level"/>
<protein>
    <recommendedName>
        <fullName evidence="3">Prokaryotic ubiquitin-like protein UBact</fullName>
    </recommendedName>
</protein>
<feature type="chain" id="PRO_0000441767" description="Prokaryotic ubiquitin-like protein UBact">
    <location>
        <begin position="1"/>
        <end position="56"/>
    </location>
</feature>
<feature type="region of interest" description="Disordered" evidence="2">
    <location>
        <begin position="1"/>
        <end position="56"/>
    </location>
</feature>
<feature type="compositionally biased region" description="Basic and acidic residues" evidence="2">
    <location>
        <begin position="26"/>
        <end position="48"/>
    </location>
</feature>
<feature type="modified residue" description="Deamidated glutamine" evidence="5">
    <location>
        <position position="56"/>
    </location>
</feature>
<feature type="cross-link" description="Isoglutamyl lysine isopeptide (Gln-Lys) (interchain with K-? in acceptor proteins)" evidence="5">
    <location>
        <position position="56"/>
    </location>
</feature>
<dbReference type="EMBL" id="ABOX02000008">
    <property type="protein sequence ID" value="EEF61703.1"/>
    <property type="molecule type" value="Genomic_DNA"/>
</dbReference>
<dbReference type="RefSeq" id="WP_007414237.1">
    <property type="nucleotide sequence ID" value="NZ_ABOX02000008.1"/>
</dbReference>
<dbReference type="SMR" id="B9XEI9"/>
<dbReference type="STRING" id="320771.Cflav_PD4743"/>
<dbReference type="Proteomes" id="UP000003688">
    <property type="component" value="Unassembled WGS sequence"/>
</dbReference>
<dbReference type="GO" id="GO:0031386">
    <property type="term" value="F:protein tag activity"/>
    <property type="evidence" value="ECO:0007669"/>
    <property type="project" value="UniProtKB-UniRule"/>
</dbReference>
<dbReference type="HAMAP" id="MF_02133">
    <property type="entry name" value="UBact"/>
    <property type="match status" value="1"/>
</dbReference>
<dbReference type="InterPro" id="IPR037543">
    <property type="entry name" value="UBact"/>
</dbReference>
<dbReference type="NCBIfam" id="NF033388">
    <property type="entry name" value="ubiq_like_UBact"/>
    <property type="match status" value="1"/>
</dbReference>
<dbReference type="Pfam" id="PF20513">
    <property type="entry name" value="UBact"/>
    <property type="match status" value="1"/>
</dbReference>
<comment type="function">
    <text evidence="5">May function as a protein modifier covalently attached to lysine residues of substrate proteins. This may serve to target the modified proteins for degradation by proteasomes.</text>
</comment>
<comment type="PTM">
    <text evidence="4">May be modified by deamidation of its C-terminal glutamine to glutamate by the adjacently encoded deamidase. This could be a prerequisite to the subsequent conjugation, as shown in the other prokaryotic ubiquitin-like protein Pup.</text>
</comment>
<comment type="similarity">
    <text evidence="1">Belongs to the ubiquitin-like protein UBact family.</text>
</comment>
<keyword id="KW-1017">Isopeptide bond</keyword>
<keyword id="KW-1185">Reference proteome</keyword>
<keyword id="KW-0833">Ubl conjugation pathway</keyword>
<accession>B9XEI9</accession>
<organism>
    <name type="scientific">Pedosphaera parvula (strain Ellin514)</name>
    <dbReference type="NCBI Taxonomy" id="320771"/>
    <lineage>
        <taxon>Bacteria</taxon>
        <taxon>Pseudomonadati</taxon>
        <taxon>Verrucomicrobiota</taxon>
        <taxon>Verrucomicrobiia</taxon>
        <taxon>Limisphaerales</taxon>
        <taxon>Limisphaerales incertae sedis</taxon>
        <taxon>Pedosphaera</taxon>
    </lineage>
</organism>
<evidence type="ECO:0000255" key="1">
    <source>
        <dbReference type="HAMAP-Rule" id="MF_02133"/>
    </source>
</evidence>
<evidence type="ECO:0000256" key="2">
    <source>
        <dbReference type="SAM" id="MobiDB-lite"/>
    </source>
</evidence>
<evidence type="ECO:0000303" key="3">
    <source>
    </source>
</evidence>
<evidence type="ECO:0000305" key="4"/>
<evidence type="ECO:0000305" key="5">
    <source>
    </source>
</evidence>
<evidence type="ECO:0000312" key="6">
    <source>
        <dbReference type="EMBL" id="EEF61703.1"/>
    </source>
</evidence>